<keyword id="KW-0325">Glycoprotein</keyword>
<keyword id="KW-0378">Hydrolase</keyword>
<keyword id="KW-0479">Metal-binding</keyword>
<keyword id="KW-0482">Metalloprotease</keyword>
<keyword id="KW-0645">Protease</keyword>
<keyword id="KW-0964">Secreted</keyword>
<keyword id="KW-0732">Signal</keyword>
<keyword id="KW-0843">Virulence</keyword>
<keyword id="KW-0862">Zinc</keyword>
<keyword id="KW-0865">Zymogen</keyword>
<name>MEP2_TRITO</name>
<accession>B6V873</accession>
<proteinExistence type="inferred from homology"/>
<protein>
    <recommendedName>
        <fullName>Extracellular metalloproteinase 2</fullName>
        <ecNumber>3.4.24.-</ecNumber>
    </recommendedName>
    <alternativeName>
        <fullName>Fungalysin MEP2</fullName>
    </alternativeName>
</protein>
<sequence length="632" mass="69760">MHGLLLAGLAAALPLGVAGLPARQQSGLSPRGIDINPYRFASMAKYSEHKATSQMVHSFSYSKDDDYVATATKLVKSTFPNMTFRTVKDHYIGTNGIGHVHFKQTAHGIDIDNADFNVNIGRDGKVFTFGNSFYEGEMPKTNPLTKRDFADPVKALHGAIKTLKLPVKPQSAKAMPMKEAETFMFEGTSGALSEPMAKLVYIQKDGKLHLTWRVETDVGDNWLLSYVDSKETETVHNVVDYVASADYKVFAWGLNDPTEGQPTMIKDPWNTTGSGSPFTWHGDGEMDYTVTRGNNIAAQDNPSGGGQWENNYRPESPELSFVYEYNEQMEPEQYKDFAITQLFYTTNTFHDLLYSFGFTEEAGNFQMNNNGKGGEGNDFAICNAQDGSGTNNANFATPPDGQNGRMRMYTWTTAQPSRDGDLEAGIVIHEYAHGLSNRLCGGPANSNCLSELEAGGMGEGWGDFYATAIRLKQDDTRETDYTMGEWAANMEGGIREYPYSTNMQTNPYTYADVEGMSEVHGIGTVWATILYDVLWNLIDEHGMSKNIMPKFVNGAPSDGRNLAMKLVLDGMTLMPCNPNFVQARDAIIDADQALTNGQNKCALMKAFSKRGLGSNYKHGKNRVNNFDMPADC</sequence>
<evidence type="ECO:0000250" key="1"/>
<evidence type="ECO:0000255" key="2"/>
<evidence type="ECO:0000255" key="3">
    <source>
        <dbReference type="PROSITE-ProRule" id="PRU10095"/>
    </source>
</evidence>
<evidence type="ECO:0000305" key="4"/>
<gene>
    <name type="primary">MEP2</name>
</gene>
<dbReference type="EC" id="3.4.24.-"/>
<dbReference type="EMBL" id="FJ267696">
    <property type="protein sequence ID" value="ACJ06664.1"/>
    <property type="molecule type" value="Genomic_DNA"/>
</dbReference>
<dbReference type="SMR" id="B6V873"/>
<dbReference type="MEROPS" id="M36.001"/>
<dbReference type="GlyCosmos" id="B6V873">
    <property type="glycosylation" value="1 site, No reported glycans"/>
</dbReference>
<dbReference type="VEuPathDB" id="FungiDB:TESG_06485"/>
<dbReference type="GO" id="GO:0005576">
    <property type="term" value="C:extracellular region"/>
    <property type="evidence" value="ECO:0007669"/>
    <property type="project" value="UniProtKB-SubCell"/>
</dbReference>
<dbReference type="GO" id="GO:0004222">
    <property type="term" value="F:metalloendopeptidase activity"/>
    <property type="evidence" value="ECO:0007669"/>
    <property type="project" value="InterPro"/>
</dbReference>
<dbReference type="GO" id="GO:0008270">
    <property type="term" value="F:zinc ion binding"/>
    <property type="evidence" value="ECO:0007669"/>
    <property type="project" value="InterPro"/>
</dbReference>
<dbReference type="GO" id="GO:0006508">
    <property type="term" value="P:proteolysis"/>
    <property type="evidence" value="ECO:0007669"/>
    <property type="project" value="UniProtKB-KW"/>
</dbReference>
<dbReference type="CDD" id="cd09596">
    <property type="entry name" value="M36"/>
    <property type="match status" value="1"/>
</dbReference>
<dbReference type="Gene3D" id="3.10.170.10">
    <property type="match status" value="1"/>
</dbReference>
<dbReference type="Gene3D" id="1.10.390.10">
    <property type="entry name" value="Neutral Protease Domain 2"/>
    <property type="match status" value="1"/>
</dbReference>
<dbReference type="InterPro" id="IPR011096">
    <property type="entry name" value="FTP_domain"/>
</dbReference>
<dbReference type="InterPro" id="IPR050371">
    <property type="entry name" value="Fungal_virulence_M36"/>
</dbReference>
<dbReference type="InterPro" id="IPR001842">
    <property type="entry name" value="Peptidase_M36"/>
</dbReference>
<dbReference type="InterPro" id="IPR027268">
    <property type="entry name" value="Peptidase_M4/M1_CTD_sf"/>
</dbReference>
<dbReference type="PANTHER" id="PTHR33478">
    <property type="entry name" value="EXTRACELLULAR METALLOPROTEINASE MEP"/>
    <property type="match status" value="1"/>
</dbReference>
<dbReference type="PANTHER" id="PTHR33478:SF1">
    <property type="entry name" value="EXTRACELLULAR METALLOPROTEINASE MEP"/>
    <property type="match status" value="1"/>
</dbReference>
<dbReference type="Pfam" id="PF07504">
    <property type="entry name" value="FTP"/>
    <property type="match status" value="1"/>
</dbReference>
<dbReference type="Pfam" id="PF02128">
    <property type="entry name" value="Peptidase_M36"/>
    <property type="match status" value="1"/>
</dbReference>
<dbReference type="PRINTS" id="PR00999">
    <property type="entry name" value="FUNGALYSIN"/>
</dbReference>
<dbReference type="SUPFAM" id="SSF55486">
    <property type="entry name" value="Metalloproteases ('zincins'), catalytic domain"/>
    <property type="match status" value="1"/>
</dbReference>
<dbReference type="PROSITE" id="PS00142">
    <property type="entry name" value="ZINC_PROTEASE"/>
    <property type="match status" value="1"/>
</dbReference>
<comment type="function">
    <text evidence="1">Secreted metalloproteinase probably acting as a virulence factor.</text>
</comment>
<comment type="cofactor">
    <cofactor evidence="1">
        <name>Zn(2+)</name>
        <dbReference type="ChEBI" id="CHEBI:29105"/>
    </cofactor>
    <text evidence="1">Binds 1 zinc ion per subunit.</text>
</comment>
<comment type="subcellular location">
    <subcellularLocation>
        <location evidence="1">Secreted</location>
    </subcellularLocation>
</comment>
<comment type="similarity">
    <text evidence="4">Belongs to the peptidase M36 family.</text>
</comment>
<organism>
    <name type="scientific">Trichophyton tonsurans</name>
    <name type="common">Scalp ringworm fungus</name>
    <dbReference type="NCBI Taxonomy" id="34387"/>
    <lineage>
        <taxon>Eukaryota</taxon>
        <taxon>Fungi</taxon>
        <taxon>Dikarya</taxon>
        <taxon>Ascomycota</taxon>
        <taxon>Pezizomycotina</taxon>
        <taxon>Eurotiomycetes</taxon>
        <taxon>Eurotiomycetidae</taxon>
        <taxon>Onygenales</taxon>
        <taxon>Arthrodermataceae</taxon>
        <taxon>Trichophyton</taxon>
    </lineage>
</organism>
<feature type="signal peptide" evidence="2">
    <location>
        <begin position="1"/>
        <end position="19"/>
    </location>
</feature>
<feature type="propeptide" id="PRO_0000380846" evidence="1">
    <location>
        <begin position="20"/>
        <end position="244"/>
    </location>
</feature>
<feature type="chain" id="PRO_0000380847" description="Extracellular metalloproteinase 2">
    <location>
        <begin position="245"/>
        <end position="632"/>
    </location>
</feature>
<feature type="active site" evidence="3">
    <location>
        <position position="430"/>
    </location>
</feature>
<feature type="binding site" evidence="3">
    <location>
        <position position="429"/>
    </location>
    <ligand>
        <name>Zn(2+)</name>
        <dbReference type="ChEBI" id="CHEBI:29105"/>
        <note>catalytic</note>
    </ligand>
</feature>
<feature type="binding site" evidence="3">
    <location>
        <position position="433"/>
    </location>
    <ligand>
        <name>Zn(2+)</name>
        <dbReference type="ChEBI" id="CHEBI:29105"/>
        <note>catalytic</note>
    </ligand>
</feature>
<feature type="glycosylation site" description="N-linked (GlcNAc...) asparagine" evidence="2">
    <location>
        <position position="270"/>
    </location>
</feature>
<reference key="1">
    <citation type="submission" date="2008-10" db="EMBL/GenBank/DDBJ databases">
        <title>Comparing putative pathogenicity factors between Trichophyton tonsurans and Trichophyton equinum.</title>
        <authorList>
            <person name="Preuett B.L."/>
            <person name="Abdel-Rahman S.M."/>
        </authorList>
    </citation>
    <scope>NUCLEOTIDE SEQUENCE [GENOMIC DNA]</scope>
</reference>